<sequence length="311" mass="34513">MYKQGEPNLWTGRLDSETDPKKFRHFQTVTFEDLSKLEKSSMPSGVGILGYAVDKGVALNKGRIGAKEGPDAIKQAFAGLPDLNQCETLVDYGNVYHDHEELIDTQKEFAMLAAKSIANHRQTFLLGGGHDIAYAQYLATRKVYPTQSIGVINIDAHFDTRAEQQSTSGTSFRQILEEDENTDYLVLGIAQGGNTQSLFDYAKEKKIDYVFADELLSHVSPTIKDMIERFVHEHDVIMFTICMDVIDSAFAPGVSAPAVLGLYPHTVLELAKRIIPSDKVSSVSIAEMNPTYDADNRTAKLVANLVHHFLK</sequence>
<gene>
    <name evidence="1" type="primary">hutG</name>
    <name type="ordered locus">SAOUHSC_02610</name>
</gene>
<reference key="1">
    <citation type="book" date="2006" name="Gram positive pathogens, 2nd edition">
        <title>The Staphylococcus aureus NCTC 8325 genome.</title>
        <editorList>
            <person name="Fischetti V."/>
            <person name="Novick R."/>
            <person name="Ferretti J."/>
            <person name="Portnoy D."/>
            <person name="Rood J."/>
        </editorList>
        <authorList>
            <person name="Gillaspy A.F."/>
            <person name="Worrell V."/>
            <person name="Orvis J."/>
            <person name="Roe B.A."/>
            <person name="Dyer D.W."/>
            <person name="Iandolo J.J."/>
        </authorList>
    </citation>
    <scope>NUCLEOTIDE SEQUENCE [LARGE SCALE GENOMIC DNA]</scope>
    <source>
        <strain>NCTC 8325 / PS 47</strain>
    </source>
</reference>
<evidence type="ECO:0000255" key="1">
    <source>
        <dbReference type="HAMAP-Rule" id="MF_00737"/>
    </source>
</evidence>
<feature type="chain" id="PRO_0000258262" description="Formimidoylglutamase">
    <location>
        <begin position="1"/>
        <end position="311"/>
    </location>
</feature>
<feature type="binding site" evidence="1">
    <location>
        <position position="130"/>
    </location>
    <ligand>
        <name>Mn(2+)</name>
        <dbReference type="ChEBI" id="CHEBI:29035"/>
        <label>1</label>
    </ligand>
</feature>
<feature type="binding site" evidence="1">
    <location>
        <position position="155"/>
    </location>
    <ligand>
        <name>Mn(2+)</name>
        <dbReference type="ChEBI" id="CHEBI:29035"/>
        <label>1</label>
    </ligand>
</feature>
<feature type="binding site" evidence="1">
    <location>
        <position position="155"/>
    </location>
    <ligand>
        <name>Mn(2+)</name>
        <dbReference type="ChEBI" id="CHEBI:29035"/>
        <label>2</label>
    </ligand>
</feature>
<feature type="binding site" evidence="1">
    <location>
        <position position="157"/>
    </location>
    <ligand>
        <name>Mn(2+)</name>
        <dbReference type="ChEBI" id="CHEBI:29035"/>
        <label>2</label>
    </ligand>
</feature>
<feature type="binding site" evidence="1">
    <location>
        <position position="159"/>
    </location>
    <ligand>
        <name>Mn(2+)</name>
        <dbReference type="ChEBI" id="CHEBI:29035"/>
        <label>1</label>
    </ligand>
</feature>
<feature type="binding site" evidence="1">
    <location>
        <position position="242"/>
    </location>
    <ligand>
        <name>Mn(2+)</name>
        <dbReference type="ChEBI" id="CHEBI:29035"/>
        <label>1</label>
    </ligand>
</feature>
<feature type="binding site" evidence="1">
    <location>
        <position position="242"/>
    </location>
    <ligand>
        <name>Mn(2+)</name>
        <dbReference type="ChEBI" id="CHEBI:29035"/>
        <label>2</label>
    </ligand>
</feature>
<feature type="binding site" evidence="1">
    <location>
        <position position="244"/>
    </location>
    <ligand>
        <name>Mn(2+)</name>
        <dbReference type="ChEBI" id="CHEBI:29035"/>
        <label>2</label>
    </ligand>
</feature>
<dbReference type="EC" id="3.5.3.8" evidence="1"/>
<dbReference type="EMBL" id="CP000253">
    <property type="protein sequence ID" value="ABD31620.1"/>
    <property type="molecule type" value="Genomic_DNA"/>
</dbReference>
<dbReference type="RefSeq" id="WP_000277968.1">
    <property type="nucleotide sequence ID" value="NZ_LS483365.1"/>
</dbReference>
<dbReference type="RefSeq" id="YP_501071.1">
    <property type="nucleotide sequence ID" value="NC_007795.1"/>
</dbReference>
<dbReference type="SMR" id="Q2FVT2"/>
<dbReference type="STRING" id="93061.SAOUHSC_02610"/>
<dbReference type="PaxDb" id="1280-SAXN108_2583"/>
<dbReference type="GeneID" id="3921388"/>
<dbReference type="KEGG" id="sao:SAOUHSC_02610"/>
<dbReference type="PATRIC" id="fig|93061.5.peg.2358"/>
<dbReference type="eggNOG" id="COG0010">
    <property type="taxonomic scope" value="Bacteria"/>
</dbReference>
<dbReference type="HOGENOM" id="CLU_039478_2_0_9"/>
<dbReference type="OrthoDB" id="9788689at2"/>
<dbReference type="UniPathway" id="UPA00379">
    <property type="reaction ID" value="UER00552"/>
</dbReference>
<dbReference type="PRO" id="PR:Q2FVT2"/>
<dbReference type="Proteomes" id="UP000008816">
    <property type="component" value="Chromosome"/>
</dbReference>
<dbReference type="GO" id="GO:0008783">
    <property type="term" value="F:agmatinase activity"/>
    <property type="evidence" value="ECO:0000318"/>
    <property type="project" value="GO_Central"/>
</dbReference>
<dbReference type="GO" id="GO:0050415">
    <property type="term" value="F:formimidoylglutamase activity"/>
    <property type="evidence" value="ECO:0007669"/>
    <property type="project" value="UniProtKB-UniRule"/>
</dbReference>
<dbReference type="GO" id="GO:0030145">
    <property type="term" value="F:manganese ion binding"/>
    <property type="evidence" value="ECO:0007669"/>
    <property type="project" value="UniProtKB-UniRule"/>
</dbReference>
<dbReference type="GO" id="GO:0019556">
    <property type="term" value="P:L-histidine catabolic process to glutamate and formamide"/>
    <property type="evidence" value="ECO:0007669"/>
    <property type="project" value="UniProtKB-UniPathway"/>
</dbReference>
<dbReference type="GO" id="GO:0019557">
    <property type="term" value="P:L-histidine catabolic process to glutamate and formate"/>
    <property type="evidence" value="ECO:0007669"/>
    <property type="project" value="UniProtKB-UniPathway"/>
</dbReference>
<dbReference type="GO" id="GO:0033389">
    <property type="term" value="P:putrescine biosynthetic process from arginine, via agmatine"/>
    <property type="evidence" value="ECO:0000318"/>
    <property type="project" value="GO_Central"/>
</dbReference>
<dbReference type="CDD" id="cd09988">
    <property type="entry name" value="Formimidoylglutamase"/>
    <property type="match status" value="1"/>
</dbReference>
<dbReference type="FunFam" id="3.40.800.10:FF:000015">
    <property type="entry name" value="Formimidoylglutamase"/>
    <property type="match status" value="1"/>
</dbReference>
<dbReference type="Gene3D" id="3.40.800.10">
    <property type="entry name" value="Ureohydrolase domain"/>
    <property type="match status" value="1"/>
</dbReference>
<dbReference type="HAMAP" id="MF_00737">
    <property type="entry name" value="Formimidoylglutam"/>
    <property type="match status" value="1"/>
</dbReference>
<dbReference type="InterPro" id="IPR005923">
    <property type="entry name" value="HutG"/>
</dbReference>
<dbReference type="InterPro" id="IPR006035">
    <property type="entry name" value="Ureohydrolase"/>
</dbReference>
<dbReference type="InterPro" id="IPR023696">
    <property type="entry name" value="Ureohydrolase_dom_sf"/>
</dbReference>
<dbReference type="NCBIfam" id="TIGR01227">
    <property type="entry name" value="hutG"/>
    <property type="match status" value="1"/>
</dbReference>
<dbReference type="PANTHER" id="PTHR11358">
    <property type="entry name" value="ARGINASE/AGMATINASE"/>
    <property type="match status" value="1"/>
</dbReference>
<dbReference type="PANTHER" id="PTHR11358:SF35">
    <property type="entry name" value="FORMIMIDOYLGLUTAMASE"/>
    <property type="match status" value="1"/>
</dbReference>
<dbReference type="Pfam" id="PF00491">
    <property type="entry name" value="Arginase"/>
    <property type="match status" value="1"/>
</dbReference>
<dbReference type="PIRSF" id="PIRSF036979">
    <property type="entry name" value="Arginase"/>
    <property type="match status" value="1"/>
</dbReference>
<dbReference type="SUPFAM" id="SSF52768">
    <property type="entry name" value="Arginase/deacetylase"/>
    <property type="match status" value="1"/>
</dbReference>
<dbReference type="PROSITE" id="PS51409">
    <property type="entry name" value="ARGINASE_2"/>
    <property type="match status" value="1"/>
</dbReference>
<proteinExistence type="inferred from homology"/>
<accession>Q2FVT2</accession>
<organism>
    <name type="scientific">Staphylococcus aureus (strain NCTC 8325 / PS 47)</name>
    <dbReference type="NCBI Taxonomy" id="93061"/>
    <lineage>
        <taxon>Bacteria</taxon>
        <taxon>Bacillati</taxon>
        <taxon>Bacillota</taxon>
        <taxon>Bacilli</taxon>
        <taxon>Bacillales</taxon>
        <taxon>Staphylococcaceae</taxon>
        <taxon>Staphylococcus</taxon>
    </lineage>
</organism>
<comment type="function">
    <text evidence="1">Catalyzes the conversion of N-formimidoyl-L-glutamate to L-glutamate and formamide.</text>
</comment>
<comment type="catalytic activity">
    <reaction evidence="1">
        <text>N-formimidoyl-L-glutamate + H2O = formamide + L-glutamate</text>
        <dbReference type="Rhea" id="RHEA:22492"/>
        <dbReference type="ChEBI" id="CHEBI:15377"/>
        <dbReference type="ChEBI" id="CHEBI:16397"/>
        <dbReference type="ChEBI" id="CHEBI:29985"/>
        <dbReference type="ChEBI" id="CHEBI:58928"/>
        <dbReference type="EC" id="3.5.3.8"/>
    </reaction>
</comment>
<comment type="cofactor">
    <cofactor evidence="1">
        <name>Mn(2+)</name>
        <dbReference type="ChEBI" id="CHEBI:29035"/>
    </cofactor>
    <text evidence="1">Binds 2 manganese ions per subunit.</text>
</comment>
<comment type="pathway">
    <text evidence="1">Amino-acid degradation; L-histidine degradation into L-glutamate; L-glutamate from N-formimidoyl-L-glutamate (hydrolase route): step 1/1.</text>
</comment>
<comment type="similarity">
    <text evidence="1">Belongs to the arginase family.</text>
</comment>
<name>HUTG_STAA8</name>
<keyword id="KW-0369">Histidine metabolism</keyword>
<keyword id="KW-0378">Hydrolase</keyword>
<keyword id="KW-0464">Manganese</keyword>
<keyword id="KW-0479">Metal-binding</keyword>
<keyword id="KW-1185">Reference proteome</keyword>
<protein>
    <recommendedName>
        <fullName evidence="1">Formimidoylglutamase</fullName>
        <ecNumber evidence="1">3.5.3.8</ecNumber>
    </recommendedName>
    <alternativeName>
        <fullName evidence="1">Formiminoglutamase</fullName>
    </alternativeName>
    <alternativeName>
        <fullName evidence="1">Formiminoglutamate hydrolase</fullName>
    </alternativeName>
</protein>